<protein>
    <recommendedName>
        <fullName evidence="1">5'-deoxynucleotidase YfbR</fullName>
        <ecNumber evidence="1">3.1.3.89</ecNumber>
    </recommendedName>
    <alternativeName>
        <fullName evidence="1">5'-deoxyribonucleotidase</fullName>
    </alternativeName>
    <alternativeName>
        <fullName evidence="1">Nucleoside 5'-monophosphate phosphohydrolase</fullName>
    </alternativeName>
</protein>
<evidence type="ECO:0000255" key="1">
    <source>
        <dbReference type="HAMAP-Rule" id="MF_01100"/>
    </source>
</evidence>
<evidence type="ECO:0000255" key="2">
    <source>
        <dbReference type="PROSITE-ProRule" id="PRU01175"/>
    </source>
</evidence>
<accession>B7NNX0</accession>
<feature type="chain" id="PRO_1000136963" description="5'-deoxynucleotidase YfbR">
    <location>
        <begin position="1"/>
        <end position="199"/>
    </location>
</feature>
<feature type="domain" description="HD" evidence="2">
    <location>
        <begin position="30"/>
        <end position="142"/>
    </location>
</feature>
<feature type="binding site" evidence="1">
    <location>
        <begin position="18"/>
        <end position="19"/>
    </location>
    <ligand>
        <name>substrate</name>
    </ligand>
</feature>
<feature type="binding site" evidence="1">
    <location>
        <position position="33"/>
    </location>
    <ligand>
        <name>a divalent metal cation</name>
        <dbReference type="ChEBI" id="CHEBI:60240"/>
    </ligand>
</feature>
<feature type="binding site" evidence="1">
    <location>
        <position position="33"/>
    </location>
    <ligand>
        <name>substrate</name>
    </ligand>
</feature>
<feature type="binding site" evidence="1">
    <location>
        <position position="68"/>
    </location>
    <ligand>
        <name>a divalent metal cation</name>
        <dbReference type="ChEBI" id="CHEBI:60240"/>
    </ligand>
</feature>
<feature type="binding site" evidence="1">
    <location>
        <position position="69"/>
    </location>
    <ligand>
        <name>a divalent metal cation</name>
        <dbReference type="ChEBI" id="CHEBI:60240"/>
    </ligand>
</feature>
<feature type="binding site" evidence="1">
    <location>
        <position position="69"/>
    </location>
    <ligand>
        <name>substrate</name>
    </ligand>
</feature>
<feature type="binding site" evidence="1">
    <location>
        <begin position="77"/>
        <end position="80"/>
    </location>
    <ligand>
        <name>substrate</name>
    </ligand>
</feature>
<feature type="binding site" evidence="1">
    <location>
        <position position="137"/>
    </location>
    <ligand>
        <name>a divalent metal cation</name>
        <dbReference type="ChEBI" id="CHEBI:60240"/>
    </ligand>
</feature>
<feature type="binding site" evidence="1">
    <location>
        <position position="137"/>
    </location>
    <ligand>
        <name>substrate</name>
    </ligand>
</feature>
<feature type="site" description="Appears to be important in orienting the phosphate for catalysis" evidence="1">
    <location>
        <position position="18"/>
    </location>
</feature>
<sequence length="199" mass="22694">MKQSHFFAHLSRLKLINRWPLMRNVRTENVSEHSLQVAMVAHALAAIKNRKFGGNVNAERIALLAMYHDASEVLTGDLPTPVKYFNSQIAQEYKAIEKIAQQKLVDMVPEELRDIFAPLIDEHAYSDEEKSLVKQADALCAYLKCLEELAAGNNEFLLAKTRLEATLEARRSQEMDYFMEVFVPSFHLSLDEISQDSPL</sequence>
<reference key="1">
    <citation type="journal article" date="2009" name="PLoS Genet.">
        <title>Organised genome dynamics in the Escherichia coli species results in highly diverse adaptive paths.</title>
        <authorList>
            <person name="Touchon M."/>
            <person name="Hoede C."/>
            <person name="Tenaillon O."/>
            <person name="Barbe V."/>
            <person name="Baeriswyl S."/>
            <person name="Bidet P."/>
            <person name="Bingen E."/>
            <person name="Bonacorsi S."/>
            <person name="Bouchier C."/>
            <person name="Bouvet O."/>
            <person name="Calteau A."/>
            <person name="Chiapello H."/>
            <person name="Clermont O."/>
            <person name="Cruveiller S."/>
            <person name="Danchin A."/>
            <person name="Diard M."/>
            <person name="Dossat C."/>
            <person name="Karoui M.E."/>
            <person name="Frapy E."/>
            <person name="Garry L."/>
            <person name="Ghigo J.M."/>
            <person name="Gilles A.M."/>
            <person name="Johnson J."/>
            <person name="Le Bouguenec C."/>
            <person name="Lescat M."/>
            <person name="Mangenot S."/>
            <person name="Martinez-Jehanne V."/>
            <person name="Matic I."/>
            <person name="Nassif X."/>
            <person name="Oztas S."/>
            <person name="Petit M.A."/>
            <person name="Pichon C."/>
            <person name="Rouy Z."/>
            <person name="Ruf C.S."/>
            <person name="Schneider D."/>
            <person name="Tourret J."/>
            <person name="Vacherie B."/>
            <person name="Vallenet D."/>
            <person name="Medigue C."/>
            <person name="Rocha E.P.C."/>
            <person name="Denamur E."/>
        </authorList>
    </citation>
    <scope>NUCLEOTIDE SEQUENCE [LARGE SCALE GENOMIC DNA]</scope>
    <source>
        <strain>IAI39 / ExPEC</strain>
    </source>
</reference>
<dbReference type="EC" id="3.1.3.89" evidence="1"/>
<dbReference type="EMBL" id="CU928164">
    <property type="protein sequence ID" value="CAR18564.1"/>
    <property type="molecule type" value="Genomic_DNA"/>
</dbReference>
<dbReference type="RefSeq" id="WP_000813860.1">
    <property type="nucleotide sequence ID" value="NC_011750.1"/>
</dbReference>
<dbReference type="RefSeq" id="YP_002408394.1">
    <property type="nucleotide sequence ID" value="NC_011750.1"/>
</dbReference>
<dbReference type="SMR" id="B7NNX0"/>
<dbReference type="STRING" id="585057.ECIAI39_2438"/>
<dbReference type="GeneID" id="93774883"/>
<dbReference type="KEGG" id="ect:ECIAI39_2438"/>
<dbReference type="PATRIC" id="fig|585057.6.peg.2540"/>
<dbReference type="HOGENOM" id="CLU_084784_0_0_6"/>
<dbReference type="Proteomes" id="UP000000749">
    <property type="component" value="Chromosome"/>
</dbReference>
<dbReference type="GO" id="GO:0005737">
    <property type="term" value="C:cytoplasm"/>
    <property type="evidence" value="ECO:0007669"/>
    <property type="project" value="UniProtKB-SubCell"/>
</dbReference>
<dbReference type="GO" id="GO:0002953">
    <property type="term" value="F:5'-deoxynucleotidase activity"/>
    <property type="evidence" value="ECO:0007669"/>
    <property type="project" value="UniProtKB-EC"/>
</dbReference>
<dbReference type="GO" id="GO:0046872">
    <property type="term" value="F:metal ion binding"/>
    <property type="evidence" value="ECO:0007669"/>
    <property type="project" value="UniProtKB-KW"/>
</dbReference>
<dbReference type="GO" id="GO:0000166">
    <property type="term" value="F:nucleotide binding"/>
    <property type="evidence" value="ECO:0007669"/>
    <property type="project" value="UniProtKB-KW"/>
</dbReference>
<dbReference type="CDD" id="cd00077">
    <property type="entry name" value="HDc"/>
    <property type="match status" value="1"/>
</dbReference>
<dbReference type="FunFam" id="1.10.3210.10:FF:000002">
    <property type="entry name" value="Nucleotidase YfbR"/>
    <property type="match status" value="1"/>
</dbReference>
<dbReference type="Gene3D" id="1.10.3210.10">
    <property type="entry name" value="Hypothetical protein af1432"/>
    <property type="match status" value="1"/>
</dbReference>
<dbReference type="HAMAP" id="MF_01100">
    <property type="entry name" value="5DNU"/>
    <property type="match status" value="1"/>
</dbReference>
<dbReference type="InterPro" id="IPR003607">
    <property type="entry name" value="HD/PDEase_dom"/>
</dbReference>
<dbReference type="InterPro" id="IPR006674">
    <property type="entry name" value="HD_domain"/>
</dbReference>
<dbReference type="InterPro" id="IPR022971">
    <property type="entry name" value="YfbR"/>
</dbReference>
<dbReference type="InterPro" id="IPR039356">
    <property type="entry name" value="YfbR/HDDC2"/>
</dbReference>
<dbReference type="NCBIfam" id="NF003009">
    <property type="entry name" value="PRK03826.1"/>
    <property type="match status" value="1"/>
</dbReference>
<dbReference type="PANTHER" id="PTHR11845">
    <property type="entry name" value="5'-DEOXYNUCLEOTIDASE HDDC2"/>
    <property type="match status" value="1"/>
</dbReference>
<dbReference type="PANTHER" id="PTHR11845:SF13">
    <property type="entry name" value="5'-DEOXYNUCLEOTIDASE HDDC2"/>
    <property type="match status" value="1"/>
</dbReference>
<dbReference type="Pfam" id="PF12917">
    <property type="entry name" value="YfbR-like"/>
    <property type="match status" value="1"/>
</dbReference>
<dbReference type="SMART" id="SM00471">
    <property type="entry name" value="HDc"/>
    <property type="match status" value="1"/>
</dbReference>
<dbReference type="SUPFAM" id="SSF109604">
    <property type="entry name" value="HD-domain/PDEase-like"/>
    <property type="match status" value="1"/>
</dbReference>
<dbReference type="PROSITE" id="PS51831">
    <property type="entry name" value="HD"/>
    <property type="match status" value="1"/>
</dbReference>
<gene>
    <name evidence="1" type="primary">yfbR</name>
    <name type="ordered locus">ECIAI39_2438</name>
</gene>
<name>5DNU_ECO7I</name>
<proteinExistence type="inferred from homology"/>
<keyword id="KW-0963">Cytoplasm</keyword>
<keyword id="KW-0378">Hydrolase</keyword>
<keyword id="KW-0479">Metal-binding</keyword>
<keyword id="KW-0547">Nucleotide-binding</keyword>
<organism>
    <name type="scientific">Escherichia coli O7:K1 (strain IAI39 / ExPEC)</name>
    <dbReference type="NCBI Taxonomy" id="585057"/>
    <lineage>
        <taxon>Bacteria</taxon>
        <taxon>Pseudomonadati</taxon>
        <taxon>Pseudomonadota</taxon>
        <taxon>Gammaproteobacteria</taxon>
        <taxon>Enterobacterales</taxon>
        <taxon>Enterobacteriaceae</taxon>
        <taxon>Escherichia</taxon>
    </lineage>
</organism>
<comment type="function">
    <text evidence="1">Catalyzes the strictly specific dephosphorylation of 2'-deoxyribonucleoside 5'-monophosphates.</text>
</comment>
<comment type="catalytic activity">
    <reaction evidence="1">
        <text>a 2'-deoxyribonucleoside 5'-phosphate + H2O = a 2'-deoxyribonucleoside + phosphate</text>
        <dbReference type="Rhea" id="RHEA:36167"/>
        <dbReference type="ChEBI" id="CHEBI:15377"/>
        <dbReference type="ChEBI" id="CHEBI:18274"/>
        <dbReference type="ChEBI" id="CHEBI:43474"/>
        <dbReference type="ChEBI" id="CHEBI:65317"/>
        <dbReference type="EC" id="3.1.3.89"/>
    </reaction>
</comment>
<comment type="cofactor">
    <cofactor evidence="1">
        <name>a divalent metal cation</name>
        <dbReference type="ChEBI" id="CHEBI:60240"/>
    </cofactor>
</comment>
<comment type="subunit">
    <text evidence="1">Homodimer.</text>
</comment>
<comment type="subcellular location">
    <subcellularLocation>
        <location evidence="1">Cytoplasm</location>
    </subcellularLocation>
</comment>
<comment type="similarity">
    <text evidence="1">Belongs to the 5DNU family.</text>
</comment>